<protein>
    <recommendedName>
        <fullName>UPF0337 protein blr1496</fullName>
    </recommendedName>
</protein>
<gene>
    <name type="ordered locus">blr1496</name>
</gene>
<name>Y1496_BRADU</name>
<organism>
    <name type="scientific">Bradyrhizobium diazoefficiens (strain JCM 10833 / BCRC 13528 / IAM 13628 / NBRC 14792 / USDA 110)</name>
    <dbReference type="NCBI Taxonomy" id="224911"/>
    <lineage>
        <taxon>Bacteria</taxon>
        <taxon>Pseudomonadati</taxon>
        <taxon>Pseudomonadota</taxon>
        <taxon>Alphaproteobacteria</taxon>
        <taxon>Hyphomicrobiales</taxon>
        <taxon>Nitrobacteraceae</taxon>
        <taxon>Bradyrhizobium</taxon>
    </lineage>
</organism>
<dbReference type="EMBL" id="BA000040">
    <property type="protein sequence ID" value="BAC46761.1"/>
    <property type="molecule type" value="Genomic_DNA"/>
</dbReference>
<dbReference type="RefSeq" id="NP_768136.1">
    <property type="nucleotide sequence ID" value="NC_004463.1"/>
</dbReference>
<dbReference type="RefSeq" id="WP_011084312.1">
    <property type="nucleotide sequence ID" value="NC_004463.1"/>
</dbReference>
<dbReference type="SMR" id="Q89UC1"/>
<dbReference type="STRING" id="224911.AAV28_04430"/>
<dbReference type="EnsemblBacteria" id="BAC46761">
    <property type="protein sequence ID" value="BAC46761"/>
    <property type="gene ID" value="BAC46761"/>
</dbReference>
<dbReference type="GeneID" id="46488772"/>
<dbReference type="KEGG" id="bja:blr1496"/>
<dbReference type="PATRIC" id="fig|224911.44.peg.930"/>
<dbReference type="eggNOG" id="COG3237">
    <property type="taxonomic scope" value="Bacteria"/>
</dbReference>
<dbReference type="HOGENOM" id="CLU_135567_2_0_5"/>
<dbReference type="InParanoid" id="Q89UC1"/>
<dbReference type="OrthoDB" id="7874071at2"/>
<dbReference type="Proteomes" id="UP000002526">
    <property type="component" value="Chromosome"/>
</dbReference>
<dbReference type="Gene3D" id="1.10.1470.10">
    <property type="entry name" value="YjbJ"/>
    <property type="match status" value="1"/>
</dbReference>
<dbReference type="InterPro" id="IPR008462">
    <property type="entry name" value="CsbD"/>
</dbReference>
<dbReference type="InterPro" id="IPR050423">
    <property type="entry name" value="UPF0337_stress_rsp"/>
</dbReference>
<dbReference type="InterPro" id="IPR036629">
    <property type="entry name" value="YjbJ_sf"/>
</dbReference>
<dbReference type="PANTHER" id="PTHR34977">
    <property type="entry name" value="UPF0337 PROTEIN YJBJ"/>
    <property type="match status" value="1"/>
</dbReference>
<dbReference type="PANTHER" id="PTHR34977:SF1">
    <property type="entry name" value="UPF0337 PROTEIN YJBJ"/>
    <property type="match status" value="1"/>
</dbReference>
<dbReference type="Pfam" id="PF05532">
    <property type="entry name" value="CsbD"/>
    <property type="match status" value="1"/>
</dbReference>
<dbReference type="SUPFAM" id="SSF69047">
    <property type="entry name" value="Hypothetical protein YjbJ"/>
    <property type="match status" value="1"/>
</dbReference>
<feature type="chain" id="PRO_0000209992" description="UPF0337 protein blr1496">
    <location>
        <begin position="1"/>
        <end position="124"/>
    </location>
</feature>
<keyword id="KW-1185">Reference proteome</keyword>
<accession>Q89UC1</accession>
<comment type="similarity">
    <text evidence="1">Belongs to the UPF0337 (CsbD) family.</text>
</comment>
<sequence length="124" mass="13003">MDKDRIVGSAKEFAGRAEGAVGDLAGDAQTQASGKAREAAGTVQNLYGQAKDAVREASETAAGYAKDAYDNSGETFRDGSQAIARKVQDNPLGALLVAGGIGFALALLMSRPARRPPPRWRYYG</sequence>
<proteinExistence type="inferred from homology"/>
<reference key="1">
    <citation type="journal article" date="2002" name="DNA Res.">
        <title>Complete genomic sequence of nitrogen-fixing symbiotic bacterium Bradyrhizobium japonicum USDA110.</title>
        <authorList>
            <person name="Kaneko T."/>
            <person name="Nakamura Y."/>
            <person name="Sato S."/>
            <person name="Minamisawa K."/>
            <person name="Uchiumi T."/>
            <person name="Sasamoto S."/>
            <person name="Watanabe A."/>
            <person name="Idesawa K."/>
            <person name="Iriguchi M."/>
            <person name="Kawashima K."/>
            <person name="Kohara M."/>
            <person name="Matsumoto M."/>
            <person name="Shimpo S."/>
            <person name="Tsuruoka H."/>
            <person name="Wada T."/>
            <person name="Yamada M."/>
            <person name="Tabata S."/>
        </authorList>
    </citation>
    <scope>NUCLEOTIDE SEQUENCE [LARGE SCALE GENOMIC DNA]</scope>
    <source>
        <strain>JCM 10833 / BCRC 13528 / IAM 13628 / NBRC 14792 / USDA 110</strain>
    </source>
</reference>
<evidence type="ECO:0000305" key="1"/>